<keyword id="KW-1003">Cell membrane</keyword>
<keyword id="KW-0472">Membrane</keyword>
<keyword id="KW-0812">Transmembrane</keyword>
<keyword id="KW-1133">Transmembrane helix</keyword>
<feature type="chain" id="PRO_0000388277" description="UPF0754 membrane protein Bcer98_0694">
    <location>
        <begin position="1"/>
        <end position="378"/>
    </location>
</feature>
<feature type="transmembrane region" description="Helical" evidence="2">
    <location>
        <begin position="358"/>
        <end position="378"/>
    </location>
</feature>
<gene>
    <name type="ordered locus">Bcer98_0694</name>
</gene>
<protein>
    <recommendedName>
        <fullName>UPF0754 membrane protein Bcer98_0694</fullName>
    </recommendedName>
</protein>
<proteinExistence type="inferred from homology"/>
<reference key="1">
    <citation type="journal article" date="2008" name="Chem. Biol. Interact.">
        <title>Extending the Bacillus cereus group genomics to putative food-borne pathogens of different toxicity.</title>
        <authorList>
            <person name="Lapidus A."/>
            <person name="Goltsman E."/>
            <person name="Auger S."/>
            <person name="Galleron N."/>
            <person name="Segurens B."/>
            <person name="Dossat C."/>
            <person name="Land M.L."/>
            <person name="Broussolle V."/>
            <person name="Brillard J."/>
            <person name="Guinebretiere M.-H."/>
            <person name="Sanchis V."/>
            <person name="Nguen-the C."/>
            <person name="Lereclus D."/>
            <person name="Richardson P."/>
            <person name="Wincker P."/>
            <person name="Weissenbach J."/>
            <person name="Ehrlich S.D."/>
            <person name="Sorokin A."/>
        </authorList>
    </citation>
    <scope>NUCLEOTIDE SEQUENCE [LARGE SCALE GENOMIC DNA]</scope>
    <source>
        <strain>DSM 22905 / CIP 110041 / 391-98 / NVH 391-98</strain>
    </source>
</reference>
<dbReference type="EMBL" id="CP000764">
    <property type="protein sequence ID" value="ABS21039.1"/>
    <property type="molecule type" value="Genomic_DNA"/>
</dbReference>
<dbReference type="RefSeq" id="WP_011983795.1">
    <property type="nucleotide sequence ID" value="NC_009674.1"/>
</dbReference>
<dbReference type="STRING" id="315749.Bcer98_0694"/>
<dbReference type="GeneID" id="33896072"/>
<dbReference type="KEGG" id="bcy:Bcer98_0694"/>
<dbReference type="eggNOG" id="COG4399">
    <property type="taxonomic scope" value="Bacteria"/>
</dbReference>
<dbReference type="HOGENOM" id="CLU_042384_0_0_9"/>
<dbReference type="OrthoDB" id="9787430at2"/>
<dbReference type="Proteomes" id="UP000002300">
    <property type="component" value="Chromosome"/>
</dbReference>
<dbReference type="GO" id="GO:0005886">
    <property type="term" value="C:plasma membrane"/>
    <property type="evidence" value="ECO:0007669"/>
    <property type="project" value="UniProtKB-SubCell"/>
</dbReference>
<dbReference type="InterPro" id="IPR007383">
    <property type="entry name" value="DUF445"/>
</dbReference>
<dbReference type="InterPro" id="IPR016991">
    <property type="entry name" value="UCP032178"/>
</dbReference>
<dbReference type="PANTHER" id="PTHR35791">
    <property type="entry name" value="UPF0754 MEMBRANE PROTEIN YHEB"/>
    <property type="match status" value="1"/>
</dbReference>
<dbReference type="PANTHER" id="PTHR35791:SF1">
    <property type="entry name" value="UPF0754 MEMBRANE PROTEIN YHEB"/>
    <property type="match status" value="1"/>
</dbReference>
<dbReference type="Pfam" id="PF04286">
    <property type="entry name" value="DUF445"/>
    <property type="match status" value="1"/>
</dbReference>
<dbReference type="PIRSF" id="PIRSF032178">
    <property type="entry name" value="UCP032178"/>
    <property type="match status" value="1"/>
</dbReference>
<organism>
    <name type="scientific">Bacillus cytotoxicus (strain DSM 22905 / CIP 110041 / 391-98 / NVH 391-98)</name>
    <dbReference type="NCBI Taxonomy" id="315749"/>
    <lineage>
        <taxon>Bacteria</taxon>
        <taxon>Bacillati</taxon>
        <taxon>Bacillota</taxon>
        <taxon>Bacilli</taxon>
        <taxon>Bacillales</taxon>
        <taxon>Bacillaceae</taxon>
        <taxon>Bacillus</taxon>
        <taxon>Bacillus cereus group</taxon>
    </lineage>
</organism>
<evidence type="ECO:0000250" key="1"/>
<evidence type="ECO:0000255" key="2"/>
<evidence type="ECO:0000305" key="3"/>
<name>Y694_BACCN</name>
<comment type="subcellular location">
    <subcellularLocation>
        <location evidence="1">Cell membrane</location>
        <topology evidence="1">Single-pass membrane protein</topology>
    </subcellularLocation>
</comment>
<comment type="similarity">
    <text evidence="3">Belongs to the UPF0754 family.</text>
</comment>
<sequence>MNVWLNMLTTTGLGAIIGGYTNHLAIKMLFRPHRPIYIGKFRVPFTPGLIPKRRDELAVQLGKMVVDHLLTAEGIGKKLTDENFQREMIQWAQIEVDKLLMNERSLRDVLEKWELAHVEEKAVQEIEEMLMKKVDTFVSKYYTYTWEQALPQFVHEKVEEMIPKAATFILTRGTQFFESDEGKARLQKMIDDFFASRGTLLNIVGMFLGNVSVVDRVQPEVIKFLQQEGTKQLLRDVLQKEWQKFKGREVKELASFIEKEMIVKYIVSTTKTRDIVSGFLNQSVQKICEPVRTNIVETLVPNIVQKGLTWGVNNTAHILKRFRLAEVVQQEVSTFSTERLEELVLSITKNELKMITYLGALLGGTIGLMQGILLLFLM</sequence>
<accession>A7GLN1</accession>